<keyword id="KW-0342">GTP-binding</keyword>
<keyword id="KW-0449">Lipoprotein</keyword>
<keyword id="KW-0460">Magnesium</keyword>
<keyword id="KW-0479">Metal-binding</keyword>
<keyword id="KW-0519">Myristate</keyword>
<keyword id="KW-0547">Nucleotide-binding</keyword>
<keyword id="KW-0564">Palmitate</keyword>
<keyword id="KW-1185">Reference proteome</keyword>
<keyword id="KW-0807">Transducer</keyword>
<reference key="1">
    <citation type="submission" date="2000-09" db="EMBL/GenBank/DDBJ databases">
        <title>Interaction analysis of the complete G-alpha subfamily of heterotrimeric G proteins from Caenorhabditis elegans.</title>
        <authorList>
            <person name="Cuppen E."/>
            <person name="Jansen G."/>
            <person name="Plasterk R.H.A."/>
        </authorList>
    </citation>
    <scope>NUCLEOTIDE SEQUENCE [MRNA]</scope>
    <source>
        <strain>Bristol N2</strain>
    </source>
</reference>
<reference key="2">
    <citation type="journal article" date="1998" name="Science">
        <title>Genome sequence of the nematode C. elegans: a platform for investigating biology.</title>
        <authorList>
            <consortium name="The C. elegans sequencing consortium"/>
        </authorList>
    </citation>
    <scope>NUCLEOTIDE SEQUENCE [LARGE SCALE GENOMIC DNA]</scope>
    <source>
        <strain>Bristol N2</strain>
    </source>
</reference>
<reference key="3">
    <citation type="journal article" date="1999" name="Nat. Genet.">
        <title>The complete family of genes encoding G proteins of Caenorhabditis elegans.</title>
        <authorList>
            <person name="Jansen G."/>
            <person name="Thijssen K.L."/>
            <person name="Werner P."/>
            <person name="van der Horst M."/>
            <person name="Hazendonk E."/>
            <person name="Plasterk R.H.A."/>
        </authorList>
    </citation>
    <scope>GENE FAMILY</scope>
    <scope>NOMENCLATURE</scope>
</reference>
<protein>
    <recommendedName>
        <fullName>Guanine nucleotide-binding protein alpha-7 subunit</fullName>
    </recommendedName>
</protein>
<evidence type="ECO:0000250" key="1"/>
<evidence type="ECO:0000255" key="2"/>
<evidence type="ECO:0000255" key="3">
    <source>
        <dbReference type="PROSITE-ProRule" id="PRU01230"/>
    </source>
</evidence>
<evidence type="ECO:0000305" key="4"/>
<name>GPA7_CAEEL</name>
<dbReference type="EMBL" id="AY008130">
    <property type="protein sequence ID" value="AAG32083.1"/>
    <property type="molecule type" value="mRNA"/>
</dbReference>
<dbReference type="EMBL" id="Z70686">
    <property type="protein sequence ID" value="CAA94612.1"/>
    <property type="molecule type" value="Genomic_DNA"/>
</dbReference>
<dbReference type="PIR" id="T24154">
    <property type="entry name" value="T24154"/>
</dbReference>
<dbReference type="RefSeq" id="NP_501921.1">
    <property type="nucleotide sequence ID" value="NM_069520.3"/>
</dbReference>
<dbReference type="SMR" id="Q21917"/>
<dbReference type="BioGRID" id="43033">
    <property type="interactions" value="1"/>
</dbReference>
<dbReference type="FunCoup" id="Q21917">
    <property type="interactions" value="369"/>
</dbReference>
<dbReference type="IntAct" id="Q21917">
    <property type="interactions" value="1"/>
</dbReference>
<dbReference type="STRING" id="6239.R10H10.5.1"/>
<dbReference type="iPTMnet" id="Q21917"/>
<dbReference type="PaxDb" id="6239-R10H10.5"/>
<dbReference type="PeptideAtlas" id="Q21917"/>
<dbReference type="EnsemblMetazoa" id="R10H10.5.1">
    <property type="protein sequence ID" value="R10H10.5.1"/>
    <property type="gene ID" value="WBGene00001669"/>
</dbReference>
<dbReference type="GeneID" id="177931"/>
<dbReference type="KEGG" id="cel:CELE_R10H10.5"/>
<dbReference type="UCSC" id="R10H10.5">
    <property type="organism name" value="c. elegans"/>
</dbReference>
<dbReference type="AGR" id="WB:WBGene00001669"/>
<dbReference type="CTD" id="177931"/>
<dbReference type="WormBase" id="R10H10.5">
    <property type="protein sequence ID" value="CE06296"/>
    <property type="gene ID" value="WBGene00001669"/>
    <property type="gene designation" value="gpa-7"/>
</dbReference>
<dbReference type="eggNOG" id="KOG0082">
    <property type="taxonomic scope" value="Eukaryota"/>
</dbReference>
<dbReference type="GeneTree" id="ENSGT00940000168787"/>
<dbReference type="HOGENOM" id="CLU_014184_6_0_1"/>
<dbReference type="InParanoid" id="Q21917"/>
<dbReference type="OMA" id="QIEYEDP"/>
<dbReference type="OrthoDB" id="5817230at2759"/>
<dbReference type="PhylomeDB" id="Q21917"/>
<dbReference type="PRO" id="PR:Q21917"/>
<dbReference type="Proteomes" id="UP000001940">
    <property type="component" value="Chromosome IV"/>
</dbReference>
<dbReference type="GO" id="GO:0005737">
    <property type="term" value="C:cytoplasm"/>
    <property type="evidence" value="ECO:0000318"/>
    <property type="project" value="GO_Central"/>
</dbReference>
<dbReference type="GO" id="GO:0005829">
    <property type="term" value="C:cytosol"/>
    <property type="evidence" value="ECO:0000314"/>
    <property type="project" value="WormBase"/>
</dbReference>
<dbReference type="GO" id="GO:0005834">
    <property type="term" value="C:heterotrimeric G-protein complex"/>
    <property type="evidence" value="ECO:0000318"/>
    <property type="project" value="GO_Central"/>
</dbReference>
<dbReference type="GO" id="GO:0005634">
    <property type="term" value="C:nucleus"/>
    <property type="evidence" value="ECO:0000314"/>
    <property type="project" value="WormBase"/>
</dbReference>
<dbReference type="GO" id="GO:0001664">
    <property type="term" value="F:G protein-coupled receptor binding"/>
    <property type="evidence" value="ECO:0000318"/>
    <property type="project" value="GO_Central"/>
</dbReference>
<dbReference type="GO" id="GO:0031683">
    <property type="term" value="F:G-protein beta/gamma-subunit complex binding"/>
    <property type="evidence" value="ECO:0000318"/>
    <property type="project" value="GO_Central"/>
</dbReference>
<dbReference type="GO" id="GO:0005525">
    <property type="term" value="F:GTP binding"/>
    <property type="evidence" value="ECO:0007669"/>
    <property type="project" value="UniProtKB-KW"/>
</dbReference>
<dbReference type="GO" id="GO:0003924">
    <property type="term" value="F:GTPase activity"/>
    <property type="evidence" value="ECO:0000318"/>
    <property type="project" value="GO_Central"/>
</dbReference>
<dbReference type="GO" id="GO:0046872">
    <property type="term" value="F:metal ion binding"/>
    <property type="evidence" value="ECO:0007669"/>
    <property type="project" value="UniProtKB-KW"/>
</dbReference>
<dbReference type="GO" id="GO:0007188">
    <property type="term" value="P:adenylate cyclase-modulating G protein-coupled receptor signaling pathway"/>
    <property type="evidence" value="ECO:0000318"/>
    <property type="project" value="GO_Central"/>
</dbReference>
<dbReference type="CDD" id="cd00066">
    <property type="entry name" value="G-alpha"/>
    <property type="match status" value="1"/>
</dbReference>
<dbReference type="FunFam" id="1.10.400.10:FF:000016">
    <property type="entry name" value="Guanine nucleotide-binding protein alpha-7 subunit"/>
    <property type="match status" value="1"/>
</dbReference>
<dbReference type="FunFam" id="3.40.50.300:FF:000041">
    <property type="entry name" value="Guanine nucleotide-binding protein G(I) subunit alpha"/>
    <property type="match status" value="1"/>
</dbReference>
<dbReference type="FunFam" id="3.40.50.300:FF:000692">
    <property type="entry name" value="Guanine nucleotide-binding protein subunit alpha"/>
    <property type="match status" value="1"/>
</dbReference>
<dbReference type="Gene3D" id="1.10.400.10">
    <property type="entry name" value="GI Alpha 1, domain 2-like"/>
    <property type="match status" value="1"/>
</dbReference>
<dbReference type="Gene3D" id="3.40.50.300">
    <property type="entry name" value="P-loop containing nucleotide triphosphate hydrolases"/>
    <property type="match status" value="1"/>
</dbReference>
<dbReference type="InterPro" id="IPR001408">
    <property type="entry name" value="Gprotein_alpha_I"/>
</dbReference>
<dbReference type="InterPro" id="IPR001019">
    <property type="entry name" value="Gprotein_alpha_su"/>
</dbReference>
<dbReference type="InterPro" id="IPR011025">
    <property type="entry name" value="GproteinA_insert"/>
</dbReference>
<dbReference type="InterPro" id="IPR027417">
    <property type="entry name" value="P-loop_NTPase"/>
</dbReference>
<dbReference type="PANTHER" id="PTHR10218">
    <property type="entry name" value="GTP-BINDING PROTEIN ALPHA SUBUNIT"/>
    <property type="match status" value="1"/>
</dbReference>
<dbReference type="PANTHER" id="PTHR10218:SF243">
    <property type="entry name" value="GUANINE NUCLEOTIDE-BINDING PROTEIN ALPHA-7 SUBUNIT"/>
    <property type="match status" value="1"/>
</dbReference>
<dbReference type="Pfam" id="PF00503">
    <property type="entry name" value="G-alpha"/>
    <property type="match status" value="1"/>
</dbReference>
<dbReference type="PRINTS" id="PR00318">
    <property type="entry name" value="GPROTEINA"/>
</dbReference>
<dbReference type="PRINTS" id="PR00441">
    <property type="entry name" value="GPROTEINAI"/>
</dbReference>
<dbReference type="SMART" id="SM00275">
    <property type="entry name" value="G_alpha"/>
    <property type="match status" value="1"/>
</dbReference>
<dbReference type="SUPFAM" id="SSF52540">
    <property type="entry name" value="P-loop containing nucleoside triphosphate hydrolases"/>
    <property type="match status" value="1"/>
</dbReference>
<dbReference type="SUPFAM" id="SSF47895">
    <property type="entry name" value="Transducin (alpha subunit), insertion domain"/>
    <property type="match status" value="1"/>
</dbReference>
<dbReference type="PROSITE" id="PS51882">
    <property type="entry name" value="G_ALPHA"/>
    <property type="match status" value="1"/>
</dbReference>
<organism>
    <name type="scientific">Caenorhabditis elegans</name>
    <dbReference type="NCBI Taxonomy" id="6239"/>
    <lineage>
        <taxon>Eukaryota</taxon>
        <taxon>Metazoa</taxon>
        <taxon>Ecdysozoa</taxon>
        <taxon>Nematoda</taxon>
        <taxon>Chromadorea</taxon>
        <taxon>Rhabditida</taxon>
        <taxon>Rhabditina</taxon>
        <taxon>Rhabditomorpha</taxon>
        <taxon>Rhabditoidea</taxon>
        <taxon>Rhabditidae</taxon>
        <taxon>Peloderinae</taxon>
        <taxon>Caenorhabditis</taxon>
    </lineage>
</organism>
<comment type="function">
    <text>Guanine nucleotide-binding proteins (G proteins) are involved as modulators or transducers in various transmembrane signaling systems.</text>
</comment>
<comment type="subunit">
    <text>G proteins are composed of 3 units; alpha, beta and gamma. The alpha chain contains the guanine nucleotide binding site.</text>
</comment>
<comment type="interaction">
    <interactant intactId="EBI-6094232">
        <id>Q21917</id>
    </interactant>
    <interactant intactId="EBI-323124">
        <id>Q09587</id>
        <label>nhr-22</label>
    </interactant>
    <organismsDiffer>false</organismsDiffer>
    <experiments>3</experiments>
</comment>
<comment type="similarity">
    <text evidence="4">Belongs to the G-alpha family. G(i/o/t/z) subfamily.</text>
</comment>
<proteinExistence type="evidence at protein level"/>
<accession>Q21917</accession>
<feature type="initiator methionine" description="Removed" evidence="2">
    <location>
        <position position="1"/>
    </location>
</feature>
<feature type="chain" id="PRO_0000203641" description="Guanine nucleotide-binding protein alpha-7 subunit">
    <location>
        <begin position="2"/>
        <end position="352"/>
    </location>
</feature>
<feature type="domain" description="G-alpha" evidence="3">
    <location>
        <begin position="32"/>
        <end position="352"/>
    </location>
</feature>
<feature type="region of interest" description="G1 motif" evidence="3">
    <location>
        <begin position="35"/>
        <end position="48"/>
    </location>
</feature>
<feature type="region of interest" description="G2 motif" evidence="3">
    <location>
        <begin position="172"/>
        <end position="180"/>
    </location>
</feature>
<feature type="region of interest" description="G3 motif" evidence="3">
    <location>
        <begin position="195"/>
        <end position="204"/>
    </location>
</feature>
<feature type="region of interest" description="G4 motif" evidence="3">
    <location>
        <begin position="264"/>
        <end position="271"/>
    </location>
</feature>
<feature type="region of interest" description="G5 motif" evidence="3">
    <location>
        <begin position="322"/>
        <end position="327"/>
    </location>
</feature>
<feature type="binding site" evidence="1">
    <location>
        <begin position="40"/>
        <end position="47"/>
    </location>
    <ligand>
        <name>GTP</name>
        <dbReference type="ChEBI" id="CHEBI:37565"/>
    </ligand>
</feature>
<feature type="binding site" evidence="1">
    <location>
        <position position="47"/>
    </location>
    <ligand>
        <name>Mg(2+)</name>
        <dbReference type="ChEBI" id="CHEBI:18420"/>
    </ligand>
</feature>
<feature type="binding site" evidence="1">
    <location>
        <begin position="174"/>
        <end position="180"/>
    </location>
    <ligand>
        <name>GTP</name>
        <dbReference type="ChEBI" id="CHEBI:37565"/>
    </ligand>
</feature>
<feature type="binding site" evidence="1">
    <location>
        <position position="180"/>
    </location>
    <ligand>
        <name>Mg(2+)</name>
        <dbReference type="ChEBI" id="CHEBI:18420"/>
    </ligand>
</feature>
<feature type="binding site" evidence="1">
    <location>
        <begin position="199"/>
        <end position="203"/>
    </location>
    <ligand>
        <name>GTP</name>
        <dbReference type="ChEBI" id="CHEBI:37565"/>
    </ligand>
</feature>
<feature type="binding site" evidence="1">
    <location>
        <begin position="268"/>
        <end position="271"/>
    </location>
    <ligand>
        <name>GTP</name>
        <dbReference type="ChEBI" id="CHEBI:37565"/>
    </ligand>
</feature>
<feature type="binding site" evidence="1">
    <location>
        <position position="324"/>
    </location>
    <ligand>
        <name>GTP</name>
        <dbReference type="ChEBI" id="CHEBI:37565"/>
    </ligand>
</feature>
<feature type="lipid moiety-binding region" description="N-myristoyl glycine" evidence="2">
    <location>
        <position position="2"/>
    </location>
</feature>
<feature type="lipid moiety-binding region" description="S-palmitoyl cysteine" evidence="2">
    <location>
        <position position="4"/>
    </location>
</feature>
<gene>
    <name type="primary">gpa-7</name>
    <name type="ORF">R10H10.5</name>
</gene>
<sequence length="352" mass="41021">MGHCTSKDQKEGKRLNRRIDEQIKKDQSMSLRIIKLLLLGAGESGKSTILKQMRILHKDGFSQQDLEMIRPVVYSNCIHSMLSILRAMFHLQIEYGEPDRVRDSQLVFATVHANKEELTEELAAAMQRLWHDPGVRECYRRSNEYQIDDSAKYFLDNLPRLSSPNYVPSEQDLLRTRIKTTGITEVLFELKGLTFRVIDVGGQRSERKKWIHCFDNVNAIIFISSLSEYDQTLREDNCTNRMQESLKLFDSICNSPWFADIHFILFLNKKDLFAEKIVRSPLTVCFPEYKGQQNQTECINYIQWKFEQLNRSSQREIYCHHTCATDTNNVQFVLDACLDMIIAKNLKSMGLC</sequence>